<reference key="1">
    <citation type="journal article" date="1996" name="Oncogene">
        <title>Bcl-w, a novel member of the Bcl-2 family, promotes cell survival.</title>
        <authorList>
            <person name="Gibson L."/>
            <person name="Holmgreen S.P."/>
            <person name="Huang D.C."/>
            <person name="Bernard O."/>
            <person name="Copeland N.G."/>
            <person name="Jenkins N.A."/>
            <person name="Sutherland G.R."/>
            <person name="Baker E."/>
            <person name="Adams J.M."/>
            <person name="Cory S."/>
        </authorList>
    </citation>
    <scope>NUCLEOTIDE SEQUENCE [MRNA] (ISOFORM 1)</scope>
    <scope>FUNCTION</scope>
</reference>
<reference key="2">
    <citation type="journal article" date="1998" name="Nat. Genet.">
        <title>Testicular degeneration in Bclw-deficient mice.</title>
        <authorList>
            <person name="Ross A.J."/>
            <person name="Waymire K.G."/>
            <person name="Moss J.E."/>
            <person name="Parlow A.F."/>
            <person name="Skinner M.K."/>
            <person name="Russell L.D."/>
            <person name="Macgregor G.R."/>
        </authorList>
    </citation>
    <scope>NUCLEOTIDE SEQUENCE [MRNA] (ISOFORM 1)</scope>
    <scope>DISRUPTION PHENOTYPE</scope>
    <source>
        <strain>C57BL/10J</strain>
    </source>
</reference>
<reference key="3">
    <citation type="journal article" date="2004" name="Biochim. Biophys. Acta">
        <title>Mouse keratinocytes express c98, a novel gene homologous to bcl-2, that is stimulated by insulin-like growth factor 1 and prevents dexamethasone-induced apoptosis.</title>
        <authorList>
            <person name="Su H.-Y."/>
            <person name="Cheng W.T.K."/>
            <person name="Chen S.-C."/>
            <person name="Lin C.-T."/>
            <person name="Lien Y.-Y."/>
            <person name="Liu H.-J."/>
            <person name="Gilmour R.S."/>
        </authorList>
    </citation>
    <scope>NUCLEOTIDE SEQUENCE [MRNA] (ISOFORM 1)</scope>
    <scope>FUNCTION</scope>
    <scope>INDUCTION</scope>
    <source>
        <strain>C57BL/6J</strain>
        <tissue>Skin</tissue>
    </source>
</reference>
<reference key="4">
    <citation type="journal article" date="2005" name="Science">
        <title>The transcriptional landscape of the mammalian genome.</title>
        <authorList>
            <person name="Carninci P."/>
            <person name="Kasukawa T."/>
            <person name="Katayama S."/>
            <person name="Gough J."/>
            <person name="Frith M.C."/>
            <person name="Maeda N."/>
            <person name="Oyama R."/>
            <person name="Ravasi T."/>
            <person name="Lenhard B."/>
            <person name="Wells C."/>
            <person name="Kodzius R."/>
            <person name="Shimokawa K."/>
            <person name="Bajic V.B."/>
            <person name="Brenner S.E."/>
            <person name="Batalov S."/>
            <person name="Forrest A.R."/>
            <person name="Zavolan M."/>
            <person name="Davis M.J."/>
            <person name="Wilming L.G."/>
            <person name="Aidinis V."/>
            <person name="Allen J.E."/>
            <person name="Ambesi-Impiombato A."/>
            <person name="Apweiler R."/>
            <person name="Aturaliya R.N."/>
            <person name="Bailey T.L."/>
            <person name="Bansal M."/>
            <person name="Baxter L."/>
            <person name="Beisel K.W."/>
            <person name="Bersano T."/>
            <person name="Bono H."/>
            <person name="Chalk A.M."/>
            <person name="Chiu K.P."/>
            <person name="Choudhary V."/>
            <person name="Christoffels A."/>
            <person name="Clutterbuck D.R."/>
            <person name="Crowe M.L."/>
            <person name="Dalla E."/>
            <person name="Dalrymple B.P."/>
            <person name="de Bono B."/>
            <person name="Della Gatta G."/>
            <person name="di Bernardo D."/>
            <person name="Down T."/>
            <person name="Engstrom P."/>
            <person name="Fagiolini M."/>
            <person name="Faulkner G."/>
            <person name="Fletcher C.F."/>
            <person name="Fukushima T."/>
            <person name="Furuno M."/>
            <person name="Futaki S."/>
            <person name="Gariboldi M."/>
            <person name="Georgii-Hemming P."/>
            <person name="Gingeras T.R."/>
            <person name="Gojobori T."/>
            <person name="Green R.E."/>
            <person name="Gustincich S."/>
            <person name="Harbers M."/>
            <person name="Hayashi Y."/>
            <person name="Hensch T.K."/>
            <person name="Hirokawa N."/>
            <person name="Hill D."/>
            <person name="Huminiecki L."/>
            <person name="Iacono M."/>
            <person name="Ikeo K."/>
            <person name="Iwama A."/>
            <person name="Ishikawa T."/>
            <person name="Jakt M."/>
            <person name="Kanapin A."/>
            <person name="Katoh M."/>
            <person name="Kawasawa Y."/>
            <person name="Kelso J."/>
            <person name="Kitamura H."/>
            <person name="Kitano H."/>
            <person name="Kollias G."/>
            <person name="Krishnan S.P."/>
            <person name="Kruger A."/>
            <person name="Kummerfeld S.K."/>
            <person name="Kurochkin I.V."/>
            <person name="Lareau L.F."/>
            <person name="Lazarevic D."/>
            <person name="Lipovich L."/>
            <person name="Liu J."/>
            <person name="Liuni S."/>
            <person name="McWilliam S."/>
            <person name="Madan Babu M."/>
            <person name="Madera M."/>
            <person name="Marchionni L."/>
            <person name="Matsuda H."/>
            <person name="Matsuzawa S."/>
            <person name="Miki H."/>
            <person name="Mignone F."/>
            <person name="Miyake S."/>
            <person name="Morris K."/>
            <person name="Mottagui-Tabar S."/>
            <person name="Mulder N."/>
            <person name="Nakano N."/>
            <person name="Nakauchi H."/>
            <person name="Ng P."/>
            <person name="Nilsson R."/>
            <person name="Nishiguchi S."/>
            <person name="Nishikawa S."/>
            <person name="Nori F."/>
            <person name="Ohara O."/>
            <person name="Okazaki Y."/>
            <person name="Orlando V."/>
            <person name="Pang K.C."/>
            <person name="Pavan W.J."/>
            <person name="Pavesi G."/>
            <person name="Pesole G."/>
            <person name="Petrovsky N."/>
            <person name="Piazza S."/>
            <person name="Reed J."/>
            <person name="Reid J.F."/>
            <person name="Ring B.Z."/>
            <person name="Ringwald M."/>
            <person name="Rost B."/>
            <person name="Ruan Y."/>
            <person name="Salzberg S.L."/>
            <person name="Sandelin A."/>
            <person name="Schneider C."/>
            <person name="Schoenbach C."/>
            <person name="Sekiguchi K."/>
            <person name="Semple C.A."/>
            <person name="Seno S."/>
            <person name="Sessa L."/>
            <person name="Sheng Y."/>
            <person name="Shibata Y."/>
            <person name="Shimada H."/>
            <person name="Shimada K."/>
            <person name="Silva D."/>
            <person name="Sinclair B."/>
            <person name="Sperling S."/>
            <person name="Stupka E."/>
            <person name="Sugiura K."/>
            <person name="Sultana R."/>
            <person name="Takenaka Y."/>
            <person name="Taki K."/>
            <person name="Tammoja K."/>
            <person name="Tan S.L."/>
            <person name="Tang S."/>
            <person name="Taylor M.S."/>
            <person name="Tegner J."/>
            <person name="Teichmann S.A."/>
            <person name="Ueda H.R."/>
            <person name="van Nimwegen E."/>
            <person name="Verardo R."/>
            <person name="Wei C.L."/>
            <person name="Yagi K."/>
            <person name="Yamanishi H."/>
            <person name="Zabarovsky E."/>
            <person name="Zhu S."/>
            <person name="Zimmer A."/>
            <person name="Hide W."/>
            <person name="Bult C."/>
            <person name="Grimmond S.M."/>
            <person name="Teasdale R.D."/>
            <person name="Liu E.T."/>
            <person name="Brusic V."/>
            <person name="Quackenbush J."/>
            <person name="Wahlestedt C."/>
            <person name="Mattick J.S."/>
            <person name="Hume D.A."/>
            <person name="Kai C."/>
            <person name="Sasaki D."/>
            <person name="Tomaru Y."/>
            <person name="Fukuda S."/>
            <person name="Kanamori-Katayama M."/>
            <person name="Suzuki M."/>
            <person name="Aoki J."/>
            <person name="Arakawa T."/>
            <person name="Iida J."/>
            <person name="Imamura K."/>
            <person name="Itoh M."/>
            <person name="Kato T."/>
            <person name="Kawaji H."/>
            <person name="Kawagashira N."/>
            <person name="Kawashima T."/>
            <person name="Kojima M."/>
            <person name="Kondo S."/>
            <person name="Konno H."/>
            <person name="Nakano K."/>
            <person name="Ninomiya N."/>
            <person name="Nishio T."/>
            <person name="Okada M."/>
            <person name="Plessy C."/>
            <person name="Shibata K."/>
            <person name="Shiraki T."/>
            <person name="Suzuki S."/>
            <person name="Tagami M."/>
            <person name="Waki K."/>
            <person name="Watahiki A."/>
            <person name="Okamura-Oho Y."/>
            <person name="Suzuki H."/>
            <person name="Kawai J."/>
            <person name="Hayashizaki Y."/>
        </authorList>
    </citation>
    <scope>NUCLEOTIDE SEQUENCE [LARGE SCALE MRNA] (ISOFORMS 1 AND 2)</scope>
    <source>
        <strain>C57BL/6J</strain>
        <tissue>Lung</tissue>
        <tissue>Testis</tissue>
    </source>
</reference>
<reference key="5">
    <citation type="journal article" date="2004" name="DNA Res.">
        <title>Prediction of the coding sequences of mouse homologues of KIAA gene: IV. The complete nucleotide sequences of 500 mouse KIAA-homologous cDNAs identified by screening of terminal sequences of cDNA clones randomly sampled from size-fractionated libraries.</title>
        <authorList>
            <person name="Okazaki N."/>
            <person name="Kikuno R."/>
            <person name="Ohara R."/>
            <person name="Inamoto S."/>
            <person name="Koseki H."/>
            <person name="Hiraoka S."/>
            <person name="Saga Y."/>
            <person name="Seino S."/>
            <person name="Nishimura M."/>
            <person name="Kaisho T."/>
            <person name="Hoshino K."/>
            <person name="Kitamura H."/>
            <person name="Nagase T."/>
            <person name="Ohara O."/>
            <person name="Koga H."/>
        </authorList>
    </citation>
    <scope>NUCLEOTIDE SEQUENCE [LARGE SCALE MRNA] (ISOFORM 1)</scope>
    <source>
        <tissue>Pancreatic islet</tissue>
    </source>
</reference>
<reference key="6">
    <citation type="journal article" date="2004" name="Genome Res.">
        <title>The status, quality, and expansion of the NIH full-length cDNA project: the Mammalian Gene Collection (MGC).</title>
        <authorList>
            <consortium name="The MGC Project Team"/>
        </authorList>
    </citation>
    <scope>NUCLEOTIDE SEQUENCE [LARGE SCALE MRNA] (ISOFORM 2)</scope>
    <source>
        <strain>C57BL/6J</strain>
        <tissue>Retina</tissue>
    </source>
</reference>
<reference key="7">
    <citation type="journal article" date="2001" name="Dev. Biol.">
        <title>BCLW mediates survival of postmitotic Sertoli cells by regulating BAX activity.</title>
        <authorList>
            <person name="Ross A.J."/>
            <person name="Amy S.P."/>
            <person name="Mahar P.L."/>
            <person name="Lindsten T."/>
            <person name="Knudson C.M."/>
            <person name="Thompson C.B."/>
            <person name="Korsmeyer S.J."/>
            <person name="MacGregor G.R."/>
        </authorList>
    </citation>
    <scope>FUNCTION</scope>
    <scope>DEVELOPMENTAL STAGE</scope>
</reference>
<reference key="8">
    <citation type="journal article" date="2010" name="Cell">
        <title>A tissue-specific atlas of mouse protein phosphorylation and expression.</title>
        <authorList>
            <person name="Huttlin E.L."/>
            <person name="Jedrychowski M.P."/>
            <person name="Elias J.E."/>
            <person name="Goswami T."/>
            <person name="Rad R."/>
            <person name="Beausoleil S.A."/>
            <person name="Villen J."/>
            <person name="Haas W."/>
            <person name="Sowa M.E."/>
            <person name="Gygi S.P."/>
        </authorList>
    </citation>
    <scope>IDENTIFICATION BY MASS SPECTROMETRY [LARGE SCALE ANALYSIS]</scope>
    <source>
        <tissue>Brain</tissue>
        <tissue>Lung</tissue>
    </source>
</reference>
<reference key="9">
    <citation type="journal article" date="2011" name="Cell Death Differ.">
        <title>Pro-apoptotic activity of inhibitory PAS domain protein (IPAS), a negative regulator of HIF-1, through binding to pro-survival Bcl-2 family proteins.</title>
        <authorList>
            <person name="Torii S."/>
            <person name="Goto Y."/>
            <person name="Ishizawa T."/>
            <person name="Hoshi H."/>
            <person name="Goryo K."/>
            <person name="Yasumoto K."/>
            <person name="Fukumura H."/>
            <person name="Sogawa K."/>
        </authorList>
    </citation>
    <scope>INTERACTION WITH HIF3A</scope>
</reference>
<name>B2CL2_MOUSE</name>
<evidence type="ECO:0000250" key="1"/>
<evidence type="ECO:0000250" key="2">
    <source>
        <dbReference type="UniProtKB" id="Q92843"/>
    </source>
</evidence>
<evidence type="ECO:0000269" key="3">
    <source>
    </source>
</evidence>
<evidence type="ECO:0000269" key="4">
    <source>
    </source>
</evidence>
<evidence type="ECO:0000269" key="5">
    <source>
    </source>
</evidence>
<evidence type="ECO:0000269" key="6">
    <source>
    </source>
</evidence>
<evidence type="ECO:0000269" key="7">
    <source>
    </source>
</evidence>
<evidence type="ECO:0000303" key="8">
    <source>
    </source>
</evidence>
<evidence type="ECO:0000303" key="9">
    <source>
    </source>
</evidence>
<evidence type="ECO:0000305" key="10"/>
<organism>
    <name type="scientific">Mus musculus</name>
    <name type="common">Mouse</name>
    <dbReference type="NCBI Taxonomy" id="10090"/>
    <lineage>
        <taxon>Eukaryota</taxon>
        <taxon>Metazoa</taxon>
        <taxon>Chordata</taxon>
        <taxon>Craniata</taxon>
        <taxon>Vertebrata</taxon>
        <taxon>Euteleostomi</taxon>
        <taxon>Mammalia</taxon>
        <taxon>Eutheria</taxon>
        <taxon>Euarchontoglires</taxon>
        <taxon>Glires</taxon>
        <taxon>Rodentia</taxon>
        <taxon>Myomorpha</taxon>
        <taxon>Muroidea</taxon>
        <taxon>Muridae</taxon>
        <taxon>Murinae</taxon>
        <taxon>Mus</taxon>
        <taxon>Mus</taxon>
    </lineage>
</organism>
<dbReference type="EMBL" id="U59746">
    <property type="protein sequence ID" value="AAB09056.1"/>
    <property type="molecule type" value="mRNA"/>
</dbReference>
<dbReference type="EMBL" id="AF030769">
    <property type="protein sequence ID" value="AAB86430.1"/>
    <property type="molecule type" value="mRNA"/>
</dbReference>
<dbReference type="EMBL" id="AY170344">
    <property type="protein sequence ID" value="AAO13177.2"/>
    <property type="molecule type" value="mRNA"/>
</dbReference>
<dbReference type="EMBL" id="AK004680">
    <property type="protein sequence ID" value="BAB23468.1"/>
    <property type="molecule type" value="mRNA"/>
</dbReference>
<dbReference type="EMBL" id="AK013244">
    <property type="protein sequence ID" value="BAB28740.1"/>
    <property type="molecule type" value="mRNA"/>
</dbReference>
<dbReference type="EMBL" id="AK015644">
    <property type="protein sequence ID" value="BAB29912.1"/>
    <property type="molecule type" value="mRNA"/>
</dbReference>
<dbReference type="EMBL" id="AK172925">
    <property type="protein sequence ID" value="BAD32203.1"/>
    <property type="status" value="ALT_FRAME"/>
    <property type="molecule type" value="mRNA"/>
</dbReference>
<dbReference type="EMBL" id="BC040369">
    <property type="protein sequence ID" value="AAH40369.1"/>
    <property type="molecule type" value="mRNA"/>
</dbReference>
<dbReference type="CCDS" id="CCDS27103.1">
    <molecule id="P70345-1"/>
</dbReference>
<dbReference type="RefSeq" id="NP_001404420.1">
    <molecule id="P70345-1"/>
    <property type="nucleotide sequence ID" value="NM_001417491.1"/>
</dbReference>
<dbReference type="RefSeq" id="NP_001404421.1">
    <molecule id="P70345-1"/>
    <property type="nucleotide sequence ID" value="NM_001417492.1"/>
</dbReference>
<dbReference type="RefSeq" id="NP_001404422.1">
    <molecule id="P70345-1"/>
    <property type="nucleotide sequence ID" value="NM_001417493.1"/>
</dbReference>
<dbReference type="RefSeq" id="NP_001404424.1">
    <molecule id="P70345-2"/>
    <property type="nucleotide sequence ID" value="NM_001417495.1"/>
</dbReference>
<dbReference type="RefSeq" id="NP_001404425.1">
    <molecule id="P70345-2"/>
    <property type="nucleotide sequence ID" value="NM_001417496.1"/>
</dbReference>
<dbReference type="RefSeq" id="NP_031563.1">
    <molecule id="P70345-1"/>
    <property type="nucleotide sequence ID" value="NM_007537.2"/>
</dbReference>
<dbReference type="RefSeq" id="XP_006518520.1">
    <property type="nucleotide sequence ID" value="XM_006518457.3"/>
</dbReference>
<dbReference type="RefSeq" id="XP_006518521.1">
    <property type="nucleotide sequence ID" value="XM_006518458.2"/>
</dbReference>
<dbReference type="SMR" id="P70345"/>
<dbReference type="BioGRID" id="198325">
    <property type="interactions" value="3"/>
</dbReference>
<dbReference type="ComplexPortal" id="CPX-310">
    <property type="entry name" value="BIK:BCL-w complex"/>
</dbReference>
<dbReference type="FunCoup" id="P70345">
    <property type="interactions" value="518"/>
</dbReference>
<dbReference type="STRING" id="10090.ENSMUSP00000022806"/>
<dbReference type="GlyGen" id="P70345">
    <property type="glycosylation" value="1 site"/>
</dbReference>
<dbReference type="PhosphoSitePlus" id="P70345"/>
<dbReference type="PaxDb" id="10090-ENSMUSP00000022806"/>
<dbReference type="PeptideAtlas" id="P70345"/>
<dbReference type="ProteomicsDB" id="277140">
    <molecule id="P70345-1"/>
</dbReference>
<dbReference type="ProteomicsDB" id="277141">
    <molecule id="P70345-2"/>
</dbReference>
<dbReference type="Pumba" id="P70345"/>
<dbReference type="Antibodypedia" id="3670">
    <property type="antibodies" value="445 antibodies from 38 providers"/>
</dbReference>
<dbReference type="DNASU" id="12050"/>
<dbReference type="Ensembl" id="ENSMUST00000022806.10">
    <molecule id="P70345-1"/>
    <property type="protein sequence ID" value="ENSMUSP00000022806.4"/>
    <property type="gene ID" value="ENSMUSG00000089682.11"/>
</dbReference>
<dbReference type="Ensembl" id="ENSMUST00000133397.4">
    <molecule id="P70345-2"/>
    <property type="protein sequence ID" value="ENSMUSP00000116385.3"/>
    <property type="gene ID" value="ENSMUSG00000089682.11"/>
</dbReference>
<dbReference type="GeneID" id="12050"/>
<dbReference type="KEGG" id="mmu:12050"/>
<dbReference type="UCSC" id="uc007txe.1">
    <molecule id="P70345-1"/>
    <property type="organism name" value="mouse"/>
</dbReference>
<dbReference type="UCSC" id="uc007txf.1">
    <molecule id="P70345-2"/>
    <property type="organism name" value="mouse"/>
</dbReference>
<dbReference type="AGR" id="MGI:108052"/>
<dbReference type="CTD" id="599"/>
<dbReference type="MGI" id="MGI:108052">
    <property type="gene designation" value="Bcl2l2"/>
</dbReference>
<dbReference type="VEuPathDB" id="HostDB:ENSMUSG00000089682"/>
<dbReference type="eggNOG" id="KOG4728">
    <property type="taxonomic scope" value="Eukaryota"/>
</dbReference>
<dbReference type="GeneTree" id="ENSGT01130000278332"/>
<dbReference type="HOGENOM" id="CLU_085401_0_2_1"/>
<dbReference type="InParanoid" id="P70345"/>
<dbReference type="OMA" id="WMVVYLE"/>
<dbReference type="OrthoDB" id="4726at2759"/>
<dbReference type="PhylomeDB" id="P70345"/>
<dbReference type="TreeFam" id="TF315834"/>
<dbReference type="BioGRID-ORCS" id="12050">
    <property type="hits" value="0 hits in 77 CRISPR screens"/>
</dbReference>
<dbReference type="ChiTaRS" id="Bcl2l2">
    <property type="organism name" value="mouse"/>
</dbReference>
<dbReference type="PRO" id="PR:P70345"/>
<dbReference type="Proteomes" id="UP000000589">
    <property type="component" value="Chromosome 14"/>
</dbReference>
<dbReference type="RNAct" id="P70345">
    <property type="molecule type" value="protein"/>
</dbReference>
<dbReference type="Bgee" id="ENSMUSG00000089682">
    <property type="expression patterns" value="Expressed in medial dorsal nucleus of thalamus and 253 other cell types or tissues"/>
</dbReference>
<dbReference type="ExpressionAtlas" id="P70345">
    <property type="expression patterns" value="baseline and differential"/>
</dbReference>
<dbReference type="GO" id="GO:0097136">
    <property type="term" value="C:Bcl-2 family protein complex"/>
    <property type="evidence" value="ECO:0000266"/>
    <property type="project" value="ComplexPortal"/>
</dbReference>
<dbReference type="GO" id="GO:0005829">
    <property type="term" value="C:cytosol"/>
    <property type="evidence" value="ECO:0000314"/>
    <property type="project" value="MGI"/>
</dbReference>
<dbReference type="GO" id="GO:0031966">
    <property type="term" value="C:mitochondrial membrane"/>
    <property type="evidence" value="ECO:0000314"/>
    <property type="project" value="MGI"/>
</dbReference>
<dbReference type="GO" id="GO:0097718">
    <property type="term" value="F:disordered domain specific binding"/>
    <property type="evidence" value="ECO:0007669"/>
    <property type="project" value="Ensembl"/>
</dbReference>
<dbReference type="GO" id="GO:0042802">
    <property type="term" value="F:identical protein binding"/>
    <property type="evidence" value="ECO:0007669"/>
    <property type="project" value="Ensembl"/>
</dbReference>
<dbReference type="GO" id="GO:0097192">
    <property type="term" value="P:extrinsic apoptotic signaling pathway in absence of ligand"/>
    <property type="evidence" value="ECO:0000314"/>
    <property type="project" value="MGI"/>
</dbReference>
<dbReference type="GO" id="GO:0043066">
    <property type="term" value="P:negative regulation of apoptotic process"/>
    <property type="evidence" value="ECO:0007669"/>
    <property type="project" value="Ensembl"/>
</dbReference>
<dbReference type="GO" id="GO:0042981">
    <property type="term" value="P:regulation of apoptotic process"/>
    <property type="evidence" value="ECO:0000266"/>
    <property type="project" value="ComplexPortal"/>
</dbReference>
<dbReference type="GO" id="GO:0060011">
    <property type="term" value="P:Sertoli cell proliferation"/>
    <property type="evidence" value="ECO:0000316"/>
    <property type="project" value="MGI"/>
</dbReference>
<dbReference type="CDD" id="cd06845">
    <property type="entry name" value="Bcl-2_like"/>
    <property type="match status" value="1"/>
</dbReference>
<dbReference type="FunFam" id="1.10.437.10:FF:000001">
    <property type="entry name" value="Bcl-2-like protein 2"/>
    <property type="match status" value="1"/>
</dbReference>
<dbReference type="Gene3D" id="1.10.437.10">
    <property type="entry name" value="Blc2-like"/>
    <property type="match status" value="1"/>
</dbReference>
<dbReference type="InterPro" id="IPR013280">
    <property type="entry name" value="Apop_reg_BclW"/>
</dbReference>
<dbReference type="InterPro" id="IPR036834">
    <property type="entry name" value="Bcl-2-like_sf"/>
</dbReference>
<dbReference type="InterPro" id="IPR046371">
    <property type="entry name" value="Bcl-2_BH1-3"/>
</dbReference>
<dbReference type="InterPro" id="IPR026298">
    <property type="entry name" value="Bcl-2_fam"/>
</dbReference>
<dbReference type="InterPro" id="IPR002475">
    <property type="entry name" value="Bcl2-like"/>
</dbReference>
<dbReference type="InterPro" id="IPR020717">
    <property type="entry name" value="Bcl2_BH1_motif_CS"/>
</dbReference>
<dbReference type="InterPro" id="IPR020726">
    <property type="entry name" value="Bcl2_BH2_motif_CS"/>
</dbReference>
<dbReference type="InterPro" id="IPR003093">
    <property type="entry name" value="Bcl2_BH4"/>
</dbReference>
<dbReference type="InterPro" id="IPR020731">
    <property type="entry name" value="Bcl2_BH4_motif_CS"/>
</dbReference>
<dbReference type="PANTHER" id="PTHR11256">
    <property type="entry name" value="BCL-2 RELATED"/>
    <property type="match status" value="1"/>
</dbReference>
<dbReference type="PANTHER" id="PTHR11256:SF13">
    <property type="entry name" value="BCL-2-LIKE PROTEIN 2"/>
    <property type="match status" value="1"/>
</dbReference>
<dbReference type="Pfam" id="PF00452">
    <property type="entry name" value="Bcl-2"/>
    <property type="match status" value="1"/>
</dbReference>
<dbReference type="Pfam" id="PF02180">
    <property type="entry name" value="BH4"/>
    <property type="match status" value="1"/>
</dbReference>
<dbReference type="PRINTS" id="PR01865">
    <property type="entry name" value="APOPREGBCLW"/>
</dbReference>
<dbReference type="PRINTS" id="PR01862">
    <property type="entry name" value="BCL2FAMILY"/>
</dbReference>
<dbReference type="SMART" id="SM00337">
    <property type="entry name" value="BCL"/>
    <property type="match status" value="1"/>
</dbReference>
<dbReference type="SMART" id="SM00265">
    <property type="entry name" value="BH4"/>
    <property type="match status" value="1"/>
</dbReference>
<dbReference type="SUPFAM" id="SSF56854">
    <property type="entry name" value="Bcl-2 inhibitors of programmed cell death"/>
    <property type="match status" value="1"/>
</dbReference>
<dbReference type="PROSITE" id="PS50062">
    <property type="entry name" value="BCL2_FAMILY"/>
    <property type="match status" value="1"/>
</dbReference>
<dbReference type="PROSITE" id="PS01080">
    <property type="entry name" value="BH1"/>
    <property type="match status" value="1"/>
</dbReference>
<dbReference type="PROSITE" id="PS01258">
    <property type="entry name" value="BH2"/>
    <property type="match status" value="1"/>
</dbReference>
<dbReference type="PROSITE" id="PS01260">
    <property type="entry name" value="BH4_1"/>
    <property type="match status" value="1"/>
</dbReference>
<dbReference type="PROSITE" id="PS50063">
    <property type="entry name" value="BH4_2"/>
    <property type="match status" value="1"/>
</dbReference>
<comment type="function">
    <text evidence="3 4 6">Promotes cell survival. Blocks dexamethasone-induced apoptosis. Mediates survival of postmitotic Sertoli cells by suppressing death-promoting activity of BAX.</text>
</comment>
<comment type="subunit">
    <text evidence="1 5">Interacts with HIF3A isoform 2 (via C-terminus domain) (PubMed:21546903). Interacts with BOP (By similarity).</text>
</comment>
<comment type="subcellular location">
    <subcellularLocation>
        <location evidence="1">Mitochondrion membrane</location>
        <topology evidence="1">Peripheral membrane protein</topology>
    </subcellularLocation>
    <text evidence="1">Loosely associated with the mitochondrial membrane in healthy cells. During apoptosis, tightly bound to the membrane (By similarity).</text>
</comment>
<comment type="alternative products">
    <event type="alternative splicing"/>
    <isoform>
        <id>P70345-1</id>
        <name>1</name>
        <sequence type="displayed"/>
    </isoform>
    <isoform>
        <id>P70345-2</id>
        <name>2</name>
        <sequence type="described" ref="VSP_014780"/>
    </isoform>
</comment>
<comment type="tissue specificity">
    <text>Expressed in almost all myeloid cell lines and in a wide range of tissues, with highest levels in brain, colon, and salivary gland.</text>
</comment>
<comment type="developmental stage">
    <text evidence="3">Expressed in both mitotic and postmitotic Sertoli cells.</text>
</comment>
<comment type="induction">
    <text evidence="4">By Igf1.</text>
</comment>
<comment type="domain">
    <text>The BH4 motif seems to be involved in the anti-apoptotic function.</text>
</comment>
<comment type="domain">
    <text evidence="1">The BH1 and BH2 motifs form a hydrophobic groove which acts as a docking site for the BH3 domain of some pro-apoptotic proteins. The C-terminal residues of BCL2L2 fold into the BH3-binding cleft and modulate pro-survival activity by regulating ligand access. When BH3 domain-containing proteins bind, they displace the C-terminus, allowing its insertion into the membrane and neutralizing the pro-survival activity of BCL2L2 (By similarity).</text>
</comment>
<comment type="disruption phenotype">
    <text evidence="7">Mice are sterile due to arrest in spermatogenesis associated with a gradual loss of germ and Sertoli cells from the testis.</text>
</comment>
<comment type="similarity">
    <text evidence="10">Belongs to the Bcl-2 family.</text>
</comment>
<comment type="sequence caution" evidence="10">
    <conflict type="frameshift">
        <sequence resource="EMBL-CDS" id="BAD32203"/>
    </conflict>
</comment>
<accession>P70345</accession>
<accession>Q545Q4</accession>
<accession>Q6A093</accession>
<accession>Q8CFR2</accession>
<accession>Q8CGL4</accession>
<accession>Q9CYW5</accession>
<feature type="initiator methionine" description="Removed" evidence="2">
    <location>
        <position position="1"/>
    </location>
</feature>
<feature type="chain" id="PRO_0000143067" description="Bcl-2-like protein 2">
    <location>
        <begin position="2"/>
        <end position="193"/>
    </location>
</feature>
<feature type="short sequence motif" description="BH4">
    <location>
        <begin position="9"/>
        <end position="29"/>
    </location>
</feature>
<feature type="short sequence motif" description="BH1">
    <location>
        <begin position="85"/>
        <end position="104"/>
    </location>
</feature>
<feature type="short sequence motif" description="BH2">
    <location>
        <begin position="136"/>
        <end position="151"/>
    </location>
</feature>
<feature type="modified residue" description="N-acetylalanine" evidence="2">
    <location>
        <position position="2"/>
    </location>
</feature>
<feature type="splice variant" id="VSP_014780" description="In isoform 2." evidence="8 9">
    <original>AEFTALYGDGALEEARRLREGNWASVRTVLTGAVALGALVTVGAFFASK</original>
    <variation>VRSSQLLLSASLYKVGLHGKIGPLMGGWGCAGKG</variation>
    <location>
        <begin position="145"/>
        <end position="193"/>
    </location>
</feature>
<feature type="sequence conflict" description="In Ref. 3; AAO13177." evidence="10" ref="3">
    <original>D</original>
    <variation>Y</variation>
    <location>
        <position position="16"/>
    </location>
</feature>
<feature type="sequence conflict" description="In Ref. 3; AAO13177." evidence="10" ref="3">
    <original>K</original>
    <variation>Q</variation>
    <location>
        <position position="21"/>
    </location>
</feature>
<feature type="sequence conflict" description="In Ref. 3; AAO13177." evidence="10" ref="3">
    <original>FE</original>
    <variation>LQ</variation>
    <location>
        <begin position="53"/>
        <end position="54"/>
    </location>
</feature>
<feature type="sequence conflict" description="In Ref. 3; AAO13177." evidence="10" ref="3">
    <original>D</original>
    <variation>H</variation>
    <location>
        <position position="63"/>
    </location>
</feature>
<feature type="sequence conflict" description="In Ref. 3; AAO13177." evidence="10" ref="3">
    <original>E</original>
    <variation>H</variation>
    <location>
        <position position="114"/>
    </location>
</feature>
<feature type="sequence conflict" description="In Ref. 3; AAO13177." evidence="10" ref="3">
    <original>D</original>
    <variation>Y</variation>
    <location>
        <position position="136"/>
    </location>
</feature>
<feature type="sequence conflict" description="In Ref. 3; AAO13177." evidence="10" ref="3">
    <original>S</original>
    <variation>Y</variation>
    <location>
        <position position="192"/>
    </location>
</feature>
<feature type="sequence conflict" description="In Ref. 4; BAB28740." evidence="10" ref="4">
    <original>K</original>
    <variation>R</variation>
    <location sequence="P70345-2">
        <position position="177"/>
    </location>
</feature>
<proteinExistence type="evidence at protein level"/>
<sequence length="193" mass="20790">MATPASTPDTRALVADFVGYKLRQKGYVCGAGPGEGPAADPLHQAMRAAGDEFETRFRRTFSDLAAQLHVTPGSAQQRFTQVSDELFQGGPNWGRLVAFFVFGAALCAESVNKEMEPLVGQVQDWMVAYLETRLADWIHSSGGWAEFTALYGDGALEEARRLREGNWASVRTVLTGAVALGALVTVGAFFASK</sequence>
<protein>
    <recommendedName>
        <fullName>Bcl-2-like protein 2</fullName>
        <shortName>Bcl2-L-2</shortName>
    </recommendedName>
    <alternativeName>
        <fullName>Apoptosis regulator Bcl-W</fullName>
    </alternativeName>
    <alternativeName>
        <fullName>c98</fullName>
    </alternativeName>
</protein>
<gene>
    <name type="primary">Bcl2l2</name>
    <name type="synonym">Bclw</name>
    <name type="synonym">Kiaa0271</name>
</gene>
<keyword id="KW-0007">Acetylation</keyword>
<keyword id="KW-0025">Alternative splicing</keyword>
<keyword id="KW-0053">Apoptosis</keyword>
<keyword id="KW-0472">Membrane</keyword>
<keyword id="KW-0496">Mitochondrion</keyword>
<keyword id="KW-1185">Reference proteome</keyword>